<gene>
    <name type="primary">COI</name>
</gene>
<evidence type="ECO:0000250" key="1">
    <source>
        <dbReference type="UniProtKB" id="P00396"/>
    </source>
</evidence>
<evidence type="ECO:0000250" key="2">
    <source>
        <dbReference type="UniProtKB" id="P00401"/>
    </source>
</evidence>
<evidence type="ECO:0000255" key="3"/>
<evidence type="ECO:0000305" key="4"/>
<comment type="function">
    <text evidence="2">Component of the cytochrome c oxidase, the last enzyme in the mitochondrial electron transport chain which drives oxidative phosphorylation. The respiratory chain contains 3 multisubunit complexes succinate dehydrogenase (complex II, CII), ubiquinol-cytochrome c oxidoreductase (cytochrome b-c1 complex, complex III, CIII) and cytochrome c oxidase (complex IV, CIV), that cooperate to transfer electrons derived from NADH and succinate to molecular oxygen, creating an electrochemical gradient over the inner membrane that drives transmembrane transport and the ATP synthase. Cytochrome c oxidase is the component of the respiratory chain that catalyzes the reduction of oxygen to water. Electrons originating from reduced cytochrome c in the intermembrane space (IMS) are transferred via the dinuclear copper A center (CU(A)) of subunit 2 and heme A of subunit 1 to the active site in subunit 1, a binuclear center (BNC) formed by heme A3 and copper B (CU(B)). The BNC reduces molecular oxygen to 2 water molecules using 4 electrons from cytochrome c in the IMS and 4 protons from the mitochondrial matrix.</text>
</comment>
<comment type="catalytic activity">
    <reaction evidence="2">
        <text>4 Fe(II)-[cytochrome c] + O2 + 8 H(+)(in) = 4 Fe(III)-[cytochrome c] + 2 H2O + 4 H(+)(out)</text>
        <dbReference type="Rhea" id="RHEA:11436"/>
        <dbReference type="Rhea" id="RHEA-COMP:10350"/>
        <dbReference type="Rhea" id="RHEA-COMP:14399"/>
        <dbReference type="ChEBI" id="CHEBI:15377"/>
        <dbReference type="ChEBI" id="CHEBI:15378"/>
        <dbReference type="ChEBI" id="CHEBI:15379"/>
        <dbReference type="ChEBI" id="CHEBI:29033"/>
        <dbReference type="ChEBI" id="CHEBI:29034"/>
        <dbReference type="EC" id="7.1.1.9"/>
    </reaction>
    <physiologicalReaction direction="left-to-right" evidence="2">
        <dbReference type="Rhea" id="RHEA:11437"/>
    </physiologicalReaction>
</comment>
<comment type="cofactor">
    <cofactor evidence="2">
        <name>heme</name>
        <dbReference type="ChEBI" id="CHEBI:30413"/>
    </cofactor>
    <text evidence="2">Binds 2 heme A groups non-covalently per subunit.</text>
</comment>
<comment type="cofactor">
    <cofactor evidence="2">
        <name>Cu cation</name>
        <dbReference type="ChEBI" id="CHEBI:23378"/>
    </cofactor>
    <text evidence="2">Binds a copper B center.</text>
</comment>
<comment type="pathway">
    <text evidence="2">Energy metabolism; oxidative phosphorylation.</text>
</comment>
<comment type="subunit">
    <text evidence="2">Component of the cytochrome c oxidase (complex IV, CIV), a multisubunit enzyme composed of a catalytic core of 3 subunits and several supernumerary subunits. The complex exists as a monomer or a dimer and forms supercomplexes (SCs) in the inner mitochondrial membrane with ubiquinol-cytochrome c oxidoreductase (cytochrome b-c1 complex, complex III, CIII).</text>
</comment>
<comment type="subcellular location">
    <subcellularLocation>
        <location evidence="2">Mitochondrion inner membrane</location>
        <topology evidence="2">Multi-pass membrane protein</topology>
    </subcellularLocation>
</comment>
<comment type="similarity">
    <text evidence="4">Belongs to the heme-copper respiratory oxidase family.</text>
</comment>
<feature type="chain" id="PRO_0000183393" description="Cytochrome c oxidase subunit 1">
    <location>
        <begin position="1"/>
        <end position="476"/>
    </location>
</feature>
<feature type="transmembrane region" description="Helical" evidence="3">
    <location>
        <begin position="19"/>
        <end position="39"/>
    </location>
</feature>
<feature type="transmembrane region" description="Helical" evidence="3">
    <location>
        <begin position="61"/>
        <end position="81"/>
    </location>
</feature>
<feature type="transmembrane region" description="Helical" evidence="3">
    <location>
        <begin position="105"/>
        <end position="125"/>
    </location>
</feature>
<feature type="transmembrane region" description="Helical" evidence="3">
    <location>
        <begin position="144"/>
        <end position="164"/>
    </location>
</feature>
<feature type="transmembrane region" description="Helical" evidence="3">
    <location>
        <begin position="194"/>
        <end position="214"/>
    </location>
</feature>
<feature type="transmembrane region" description="Helical" evidence="3">
    <location>
        <begin position="240"/>
        <end position="260"/>
    </location>
</feature>
<feature type="transmembrane region" description="Helical" evidence="3">
    <location>
        <begin position="278"/>
        <end position="298"/>
    </location>
</feature>
<feature type="transmembrane region" description="Helical" evidence="3">
    <location>
        <begin position="309"/>
        <end position="329"/>
    </location>
</feature>
<feature type="transmembrane region" description="Helical" evidence="3">
    <location>
        <begin position="345"/>
        <end position="365"/>
    </location>
</feature>
<feature type="transmembrane region" description="Helical" evidence="3">
    <location>
        <begin position="379"/>
        <end position="399"/>
    </location>
</feature>
<feature type="transmembrane region" description="Helical" evidence="3">
    <location>
        <begin position="415"/>
        <end position="435"/>
    </location>
</feature>
<feature type="transmembrane region" description="Helical" evidence="3">
    <location>
        <begin position="455"/>
        <end position="475"/>
    </location>
</feature>
<feature type="binding site" evidence="2">
    <location>
        <position position="42"/>
    </location>
    <ligand>
        <name>Ca(2+)</name>
        <dbReference type="ChEBI" id="CHEBI:29108"/>
    </ligand>
</feature>
<feature type="binding site" description="axial binding residue" evidence="2">
    <location>
        <position position="66"/>
    </location>
    <ligand>
        <name>Fe(II)-heme a</name>
        <dbReference type="ChEBI" id="CHEBI:61715"/>
        <note>low-spin</note>
    </ligand>
    <ligandPart>
        <name>Fe</name>
        <dbReference type="ChEBI" id="CHEBI:18248"/>
    </ligandPart>
</feature>
<feature type="binding site" evidence="2">
    <location>
        <position position="246"/>
    </location>
    <ligand>
        <name>Cu cation</name>
        <dbReference type="ChEBI" id="CHEBI:23378"/>
        <label>B</label>
    </ligand>
</feature>
<feature type="binding site" evidence="1">
    <location>
        <position position="250"/>
    </location>
    <ligand>
        <name>O2</name>
        <dbReference type="ChEBI" id="CHEBI:15379"/>
    </ligand>
</feature>
<feature type="binding site" evidence="2">
    <location>
        <position position="295"/>
    </location>
    <ligand>
        <name>Cu cation</name>
        <dbReference type="ChEBI" id="CHEBI:23378"/>
        <label>B</label>
    </ligand>
</feature>
<feature type="binding site" evidence="2">
    <location>
        <position position="296"/>
    </location>
    <ligand>
        <name>Cu cation</name>
        <dbReference type="ChEBI" id="CHEBI:23378"/>
        <label>B</label>
    </ligand>
</feature>
<feature type="binding site" evidence="2">
    <location>
        <position position="374"/>
    </location>
    <ligand>
        <name>Mg(2+)</name>
        <dbReference type="ChEBI" id="CHEBI:18420"/>
        <note>ligand shared with subunit 2</note>
    </ligand>
</feature>
<feature type="binding site" evidence="2">
    <location>
        <position position="375"/>
    </location>
    <ligand>
        <name>Mg(2+)</name>
        <dbReference type="ChEBI" id="CHEBI:18420"/>
        <note>ligand shared with subunit 2</note>
    </ligand>
</feature>
<feature type="binding site" description="axial binding residue" evidence="2">
    <location>
        <position position="382"/>
    </location>
    <ligand>
        <name>heme a3</name>
        <dbReference type="ChEBI" id="CHEBI:83282"/>
        <note>high-spin</note>
    </ligand>
    <ligandPart>
        <name>Fe</name>
        <dbReference type="ChEBI" id="CHEBI:18248"/>
    </ligandPart>
</feature>
<feature type="binding site" description="axial binding residue" evidence="2">
    <location>
        <position position="384"/>
    </location>
    <ligand>
        <name>Fe(II)-heme a</name>
        <dbReference type="ChEBI" id="CHEBI:61715"/>
        <note>low-spin</note>
    </ligand>
    <ligandPart>
        <name>Fe</name>
        <dbReference type="ChEBI" id="CHEBI:18248"/>
    </ligandPart>
</feature>
<feature type="binding site" evidence="2">
    <location>
        <position position="448"/>
    </location>
    <ligand>
        <name>Ca(2+)</name>
        <dbReference type="ChEBI" id="CHEBI:29108"/>
    </ligand>
</feature>
<feature type="cross-link" description="1'-histidyl-3'-tyrosine (His-Tyr)" evidence="2">
    <location>
        <begin position="246"/>
        <end position="250"/>
    </location>
</feature>
<name>COX1_PLABE</name>
<keyword id="KW-0106">Calcium</keyword>
<keyword id="KW-0186">Copper</keyword>
<keyword id="KW-0249">Electron transport</keyword>
<keyword id="KW-0349">Heme</keyword>
<keyword id="KW-0408">Iron</keyword>
<keyword id="KW-0460">Magnesium</keyword>
<keyword id="KW-0472">Membrane</keyword>
<keyword id="KW-0479">Metal-binding</keyword>
<keyword id="KW-0496">Mitochondrion</keyword>
<keyword id="KW-0999">Mitochondrion inner membrane</keyword>
<keyword id="KW-0679">Respiratory chain</keyword>
<keyword id="KW-1278">Translocase</keyword>
<keyword id="KW-0812">Transmembrane</keyword>
<keyword id="KW-1133">Transmembrane helix</keyword>
<keyword id="KW-0813">Transport</keyword>
<dbReference type="EC" id="7.1.1.9"/>
<dbReference type="EMBL" id="AF014115">
    <property type="protein sequence ID" value="AAD01525.1"/>
    <property type="status" value="ALT_SEQ"/>
    <property type="molecule type" value="Genomic_DNA"/>
</dbReference>
<dbReference type="SMR" id="O99252"/>
<dbReference type="VEuPathDB" id="PlasmoDB:PBANKA_MIT01800"/>
<dbReference type="UniPathway" id="UPA00705"/>
<dbReference type="GO" id="GO:0005743">
    <property type="term" value="C:mitochondrial inner membrane"/>
    <property type="evidence" value="ECO:0007669"/>
    <property type="project" value="UniProtKB-SubCell"/>
</dbReference>
<dbReference type="GO" id="GO:0004129">
    <property type="term" value="F:cytochrome-c oxidase activity"/>
    <property type="evidence" value="ECO:0007669"/>
    <property type="project" value="UniProtKB-EC"/>
</dbReference>
<dbReference type="GO" id="GO:0020037">
    <property type="term" value="F:heme binding"/>
    <property type="evidence" value="ECO:0007669"/>
    <property type="project" value="InterPro"/>
</dbReference>
<dbReference type="GO" id="GO:0046872">
    <property type="term" value="F:metal ion binding"/>
    <property type="evidence" value="ECO:0007669"/>
    <property type="project" value="UniProtKB-KW"/>
</dbReference>
<dbReference type="GO" id="GO:0015990">
    <property type="term" value="P:electron transport coupled proton transport"/>
    <property type="evidence" value="ECO:0007669"/>
    <property type="project" value="TreeGrafter"/>
</dbReference>
<dbReference type="GO" id="GO:0006123">
    <property type="term" value="P:mitochondrial electron transport, cytochrome c to oxygen"/>
    <property type="evidence" value="ECO:0007669"/>
    <property type="project" value="TreeGrafter"/>
</dbReference>
<dbReference type="FunFam" id="1.20.210.10:FF:000007">
    <property type="entry name" value="Cytochrome c oxidase subunit 1"/>
    <property type="match status" value="1"/>
</dbReference>
<dbReference type="Gene3D" id="1.20.210.10">
    <property type="entry name" value="Cytochrome c oxidase-like, subunit I domain"/>
    <property type="match status" value="1"/>
</dbReference>
<dbReference type="InterPro" id="IPR023616">
    <property type="entry name" value="Cyt_c_oxase-like_su1_dom"/>
</dbReference>
<dbReference type="InterPro" id="IPR036927">
    <property type="entry name" value="Cyt_c_oxase-like_su1_sf"/>
</dbReference>
<dbReference type="InterPro" id="IPR000883">
    <property type="entry name" value="Cyt_C_Oxase_1"/>
</dbReference>
<dbReference type="InterPro" id="IPR023615">
    <property type="entry name" value="Cyt_c_Oxase_su1_BS"/>
</dbReference>
<dbReference type="PANTHER" id="PTHR10422">
    <property type="entry name" value="CYTOCHROME C OXIDASE SUBUNIT 1"/>
    <property type="match status" value="1"/>
</dbReference>
<dbReference type="PANTHER" id="PTHR10422:SF18">
    <property type="entry name" value="CYTOCHROME C OXIDASE SUBUNIT 1"/>
    <property type="match status" value="1"/>
</dbReference>
<dbReference type="Pfam" id="PF00115">
    <property type="entry name" value="COX1"/>
    <property type="match status" value="1"/>
</dbReference>
<dbReference type="PRINTS" id="PR01165">
    <property type="entry name" value="CYCOXIDASEI"/>
</dbReference>
<dbReference type="SUPFAM" id="SSF81442">
    <property type="entry name" value="Cytochrome c oxidase subunit I-like"/>
    <property type="match status" value="1"/>
</dbReference>
<dbReference type="PROSITE" id="PS50855">
    <property type="entry name" value="COX1"/>
    <property type="match status" value="1"/>
</dbReference>
<dbReference type="PROSITE" id="PS00077">
    <property type="entry name" value="COX1_CUB"/>
    <property type="match status" value="1"/>
</dbReference>
<organism>
    <name type="scientific">Plasmodium berghei</name>
    <dbReference type="NCBI Taxonomy" id="5821"/>
    <lineage>
        <taxon>Eukaryota</taxon>
        <taxon>Sar</taxon>
        <taxon>Alveolata</taxon>
        <taxon>Apicomplexa</taxon>
        <taxon>Aconoidasida</taxon>
        <taxon>Haemosporida</taxon>
        <taxon>Plasmodiidae</taxon>
        <taxon>Plasmodium</taxon>
        <taxon>Plasmodium (Vinckeia)</taxon>
    </lineage>
</organism>
<proteinExistence type="inferred from homology"/>
<sequence>MVLNRYALITNCNHKTLGLYYLWFSFLFGTYGFLLSVILRTELYSSSLRIIAQENVNLYNMIFTIHGIIMIFFNIMPGLFGGFGNYYLPILCGSSELAYPRINSISLLLQPIAFILVILSTAAEFGGGTGWTLYPPLSTSLMSLSPVAVDVIIIGLLVSGIASIMSSLNFVTTVLHLRAKGLSLGVLSVSTWSIIITSIMLLLTLPVLTGGVLMLLSDLHFNTLFFDPTFAGDPILYQHLFWFFGHPEVYILILPAFGVISHVISTNYCRSLFGNQSMILAMGCIAVLGSVVWVHHMYTTGLEVDTRAFFTSTTILISIPTGTKVFNWLCTYMSSNFGITHSSSLLCLLFICTFTFGGTTGVILGNGAIDIALHDTYYVIAHFHFVLSIGAIIALFTCVSFFQESFFGKTLRENTLIVLWSILFFIGVILTFLPMHFLGFNVMPRRIPDYPDALNGWNMICSIGSTMTLFGLLIFK</sequence>
<accession>O99252</accession>
<geneLocation type="mitochondrion"/>
<protein>
    <recommendedName>
        <fullName>Cytochrome c oxidase subunit 1</fullName>
        <ecNumber>7.1.1.9</ecNumber>
    </recommendedName>
    <alternativeName>
        <fullName>Cytochrome c oxidase polypeptide I</fullName>
    </alternativeName>
</protein>
<reference key="1">
    <citation type="submission" date="1997-07" db="EMBL/GenBank/DDBJ databases">
        <authorList>
            <person name="Tan T.M.C."/>
            <person name="Noviyanti R."/>
            <person name="Syafruddi N."/>
            <person name="Marzuki S."/>
            <person name="Ting R.C.Y."/>
        </authorList>
    </citation>
    <scope>NUCLEOTIDE SEQUENCE [GENOMIC DNA]</scope>
</reference>